<gene>
    <name evidence="1" type="primary">leuS</name>
    <name type="ordered locus">LCA_1436</name>
</gene>
<name>SYL_LATSS</name>
<feature type="chain" id="PRO_1000009362" description="Leucine--tRNA ligase">
    <location>
        <begin position="1"/>
        <end position="807"/>
    </location>
</feature>
<feature type="short sequence motif" description="'HIGH' region">
    <location>
        <begin position="40"/>
        <end position="51"/>
    </location>
</feature>
<feature type="short sequence motif" description="'KMSKS' region">
    <location>
        <begin position="575"/>
        <end position="579"/>
    </location>
</feature>
<feature type="binding site" evidence="1">
    <location>
        <position position="578"/>
    </location>
    <ligand>
        <name>ATP</name>
        <dbReference type="ChEBI" id="CHEBI:30616"/>
    </ligand>
</feature>
<protein>
    <recommendedName>
        <fullName evidence="1">Leucine--tRNA ligase</fullName>
        <ecNumber evidence="1">6.1.1.4</ecNumber>
    </recommendedName>
    <alternativeName>
        <fullName evidence="1">Leucyl-tRNA synthetase</fullName>
        <shortName evidence="1">LeuRS</shortName>
    </alternativeName>
</protein>
<comment type="catalytic activity">
    <reaction evidence="1">
        <text>tRNA(Leu) + L-leucine + ATP = L-leucyl-tRNA(Leu) + AMP + diphosphate</text>
        <dbReference type="Rhea" id="RHEA:11688"/>
        <dbReference type="Rhea" id="RHEA-COMP:9613"/>
        <dbReference type="Rhea" id="RHEA-COMP:9622"/>
        <dbReference type="ChEBI" id="CHEBI:30616"/>
        <dbReference type="ChEBI" id="CHEBI:33019"/>
        <dbReference type="ChEBI" id="CHEBI:57427"/>
        <dbReference type="ChEBI" id="CHEBI:78442"/>
        <dbReference type="ChEBI" id="CHEBI:78494"/>
        <dbReference type="ChEBI" id="CHEBI:456215"/>
        <dbReference type="EC" id="6.1.1.4"/>
    </reaction>
</comment>
<comment type="subcellular location">
    <subcellularLocation>
        <location evidence="1">Cytoplasm</location>
    </subcellularLocation>
</comment>
<comment type="similarity">
    <text evidence="1">Belongs to the class-I aminoacyl-tRNA synthetase family.</text>
</comment>
<accession>Q38VP5</accession>
<keyword id="KW-0030">Aminoacyl-tRNA synthetase</keyword>
<keyword id="KW-0067">ATP-binding</keyword>
<keyword id="KW-0963">Cytoplasm</keyword>
<keyword id="KW-0436">Ligase</keyword>
<keyword id="KW-0547">Nucleotide-binding</keyword>
<keyword id="KW-0648">Protein biosynthesis</keyword>
<keyword id="KW-1185">Reference proteome</keyword>
<organism>
    <name type="scientific">Latilactobacillus sakei subsp. sakei (strain 23K)</name>
    <name type="common">Lactobacillus sakei subsp. sakei</name>
    <dbReference type="NCBI Taxonomy" id="314315"/>
    <lineage>
        <taxon>Bacteria</taxon>
        <taxon>Bacillati</taxon>
        <taxon>Bacillota</taxon>
        <taxon>Bacilli</taxon>
        <taxon>Lactobacillales</taxon>
        <taxon>Lactobacillaceae</taxon>
        <taxon>Latilactobacillus</taxon>
    </lineage>
</organism>
<reference key="1">
    <citation type="journal article" date="2005" name="Nat. Biotechnol.">
        <title>The complete genome sequence of the meat-borne lactic acid bacterium Lactobacillus sakei 23K.</title>
        <authorList>
            <person name="Chaillou S."/>
            <person name="Champomier-Verges M.-C."/>
            <person name="Cornet M."/>
            <person name="Crutz-Le Coq A.-M."/>
            <person name="Dudez A.-M."/>
            <person name="Martin V."/>
            <person name="Beaufils S."/>
            <person name="Darbon-Rongere E."/>
            <person name="Bossy R."/>
            <person name="Loux V."/>
            <person name="Zagorec M."/>
        </authorList>
    </citation>
    <scope>NUCLEOTIDE SEQUENCE [LARGE SCALE GENOMIC DNA]</scope>
    <source>
        <strain>23K</strain>
    </source>
</reference>
<dbReference type="EC" id="6.1.1.4" evidence="1"/>
<dbReference type="EMBL" id="CR936503">
    <property type="protein sequence ID" value="CAI55738.1"/>
    <property type="molecule type" value="Genomic_DNA"/>
</dbReference>
<dbReference type="RefSeq" id="WP_011375128.1">
    <property type="nucleotide sequence ID" value="NC_007576.1"/>
</dbReference>
<dbReference type="SMR" id="Q38VP5"/>
<dbReference type="STRING" id="314315.LCA_1436"/>
<dbReference type="KEGG" id="lsa:LCA_1436"/>
<dbReference type="eggNOG" id="COG0495">
    <property type="taxonomic scope" value="Bacteria"/>
</dbReference>
<dbReference type="HOGENOM" id="CLU_004427_0_0_9"/>
<dbReference type="OrthoDB" id="9810365at2"/>
<dbReference type="Proteomes" id="UP000002707">
    <property type="component" value="Chromosome"/>
</dbReference>
<dbReference type="GO" id="GO:0005829">
    <property type="term" value="C:cytosol"/>
    <property type="evidence" value="ECO:0007669"/>
    <property type="project" value="TreeGrafter"/>
</dbReference>
<dbReference type="GO" id="GO:0002161">
    <property type="term" value="F:aminoacyl-tRNA deacylase activity"/>
    <property type="evidence" value="ECO:0007669"/>
    <property type="project" value="InterPro"/>
</dbReference>
<dbReference type="GO" id="GO:0005524">
    <property type="term" value="F:ATP binding"/>
    <property type="evidence" value="ECO:0007669"/>
    <property type="project" value="UniProtKB-UniRule"/>
</dbReference>
<dbReference type="GO" id="GO:0004823">
    <property type="term" value="F:leucine-tRNA ligase activity"/>
    <property type="evidence" value="ECO:0007669"/>
    <property type="project" value="UniProtKB-UniRule"/>
</dbReference>
<dbReference type="GO" id="GO:0006429">
    <property type="term" value="P:leucyl-tRNA aminoacylation"/>
    <property type="evidence" value="ECO:0007669"/>
    <property type="project" value="UniProtKB-UniRule"/>
</dbReference>
<dbReference type="CDD" id="cd07958">
    <property type="entry name" value="Anticodon_Ia_Leu_BEm"/>
    <property type="match status" value="1"/>
</dbReference>
<dbReference type="CDD" id="cd00812">
    <property type="entry name" value="LeuRS_core"/>
    <property type="match status" value="1"/>
</dbReference>
<dbReference type="FunFam" id="3.10.20.590:FF:000001">
    <property type="entry name" value="Leucine--tRNA ligase"/>
    <property type="match status" value="1"/>
</dbReference>
<dbReference type="FunFam" id="3.40.50.620:FF:000056">
    <property type="entry name" value="Leucine--tRNA ligase"/>
    <property type="match status" value="1"/>
</dbReference>
<dbReference type="FunFam" id="3.40.50.620:FF:000077">
    <property type="entry name" value="Leucine--tRNA ligase"/>
    <property type="match status" value="1"/>
</dbReference>
<dbReference type="FunFam" id="1.10.730.10:FF:000011">
    <property type="entry name" value="Leucine--tRNA ligase chloroplastic/mitochondrial"/>
    <property type="match status" value="1"/>
</dbReference>
<dbReference type="Gene3D" id="3.10.20.590">
    <property type="match status" value="1"/>
</dbReference>
<dbReference type="Gene3D" id="3.40.50.620">
    <property type="entry name" value="HUPs"/>
    <property type="match status" value="2"/>
</dbReference>
<dbReference type="Gene3D" id="1.10.730.10">
    <property type="entry name" value="Isoleucyl-tRNA Synthetase, Domain 1"/>
    <property type="match status" value="1"/>
</dbReference>
<dbReference type="HAMAP" id="MF_00049_B">
    <property type="entry name" value="Leu_tRNA_synth_B"/>
    <property type="match status" value="1"/>
</dbReference>
<dbReference type="InterPro" id="IPR001412">
    <property type="entry name" value="aa-tRNA-synth_I_CS"/>
</dbReference>
<dbReference type="InterPro" id="IPR002300">
    <property type="entry name" value="aa-tRNA-synth_Ia"/>
</dbReference>
<dbReference type="InterPro" id="IPR002302">
    <property type="entry name" value="Leu-tRNA-ligase"/>
</dbReference>
<dbReference type="InterPro" id="IPR025709">
    <property type="entry name" value="Leu_tRNA-synth_edit"/>
</dbReference>
<dbReference type="InterPro" id="IPR013155">
    <property type="entry name" value="M/V/L/I-tRNA-synth_anticd-bd"/>
</dbReference>
<dbReference type="InterPro" id="IPR015413">
    <property type="entry name" value="Methionyl/Leucyl_tRNA_Synth"/>
</dbReference>
<dbReference type="InterPro" id="IPR014729">
    <property type="entry name" value="Rossmann-like_a/b/a_fold"/>
</dbReference>
<dbReference type="InterPro" id="IPR009080">
    <property type="entry name" value="tRNAsynth_Ia_anticodon-bd"/>
</dbReference>
<dbReference type="InterPro" id="IPR009008">
    <property type="entry name" value="Val/Leu/Ile-tRNA-synth_edit"/>
</dbReference>
<dbReference type="NCBIfam" id="TIGR00396">
    <property type="entry name" value="leuS_bact"/>
    <property type="match status" value="1"/>
</dbReference>
<dbReference type="PANTHER" id="PTHR43740:SF2">
    <property type="entry name" value="LEUCINE--TRNA LIGASE, MITOCHONDRIAL"/>
    <property type="match status" value="1"/>
</dbReference>
<dbReference type="PANTHER" id="PTHR43740">
    <property type="entry name" value="LEUCYL-TRNA SYNTHETASE"/>
    <property type="match status" value="1"/>
</dbReference>
<dbReference type="Pfam" id="PF08264">
    <property type="entry name" value="Anticodon_1"/>
    <property type="match status" value="1"/>
</dbReference>
<dbReference type="Pfam" id="PF00133">
    <property type="entry name" value="tRNA-synt_1"/>
    <property type="match status" value="1"/>
</dbReference>
<dbReference type="Pfam" id="PF13603">
    <property type="entry name" value="tRNA-synt_1_2"/>
    <property type="match status" value="1"/>
</dbReference>
<dbReference type="Pfam" id="PF09334">
    <property type="entry name" value="tRNA-synt_1g"/>
    <property type="match status" value="1"/>
</dbReference>
<dbReference type="PRINTS" id="PR00985">
    <property type="entry name" value="TRNASYNTHLEU"/>
</dbReference>
<dbReference type="SUPFAM" id="SSF47323">
    <property type="entry name" value="Anticodon-binding domain of a subclass of class I aminoacyl-tRNA synthetases"/>
    <property type="match status" value="1"/>
</dbReference>
<dbReference type="SUPFAM" id="SSF52374">
    <property type="entry name" value="Nucleotidylyl transferase"/>
    <property type="match status" value="1"/>
</dbReference>
<dbReference type="SUPFAM" id="SSF50677">
    <property type="entry name" value="ValRS/IleRS/LeuRS editing domain"/>
    <property type="match status" value="1"/>
</dbReference>
<dbReference type="PROSITE" id="PS00178">
    <property type="entry name" value="AA_TRNA_LIGASE_I"/>
    <property type="match status" value="1"/>
</dbReference>
<proteinExistence type="inferred from homology"/>
<sequence length="807" mass="92127">MTYDHRAVEQKWQAYWQSHKSFKTTEDKDKKNFYALDMFPYPSGQGLHVGHPEGYTATDILARMKRMQGFNVLHPMGWDAFGLPAEQYALDTGNNPADFTQKNINTFKRQINSLGFSYDWDREVNTTDPDFYKWTQWIFEKMYEKGLAYEAEVAVNWSPDLGTVVANEEVIDGKTERGGYPVYRKPMRQWMLKITAYADRLIDDLDLVDWPESVKDMQRNWIGRSKGAEVSFAVENHDANIDVFTTRADTMFGVSYIVMAPEHKLVADITTPEQKAAVDAYLKEIEHKSDLERTDLAKDKTGAFTGAYAINPVNGERLPIWISDYVLASYGTGAVMAVPAHDPRDWEFAKKFGLPLKPVVSGGNPEEAVHTEPGVMINSDFLDGLDKQAAIDKMIPWLVEHKVGHEQISYKLRDWLFSRQRYWGEPIPIIHWEDGTTSVVPEDQLPLELPLTSDIKPSGTGESPLANLTDWLNVTDENGRKGRRETNTMPQWAGSSWYYLRYIDPKNPDKLADFDKLKDWLPVDMYIGGAEHAVLHLLYVRFWHKFLYDIGVVPTKEPFQHLYNQGMILGDNHEKMSKSKGNVVNPDDVVDRFGADTLRLYEMFMGPLDASISWSEKGLAGARKFLDRVWRLYTEEDTDENDQLSSKIVADNNDQLKKVYNETVKKVTEDFESMHFNVAISQLMVFINDAYKADTFPREYAEGFVKLLAPIAPHMMEELWAMLGHDDSISYVDWPTFDPAALIANEVEVIFQVNGKLKAKVTVAKDTPKEELEAMAKANEKVAEFIADKTVRKVIAIPNKLVNIVAN</sequence>
<evidence type="ECO:0000255" key="1">
    <source>
        <dbReference type="HAMAP-Rule" id="MF_00049"/>
    </source>
</evidence>